<name>OMCBI_CHLTH</name>
<protein>
    <recommendedName>
        <fullName>Large cysteine-rich periplasmic protein OmcB, serovars I/J</fullName>
        <shortName>Large-CRP</shortName>
    </recommendedName>
    <alternativeName>
        <fullName>60 kDa CRP</fullName>
    </alternativeName>
    <alternativeName>
        <fullName>60 kDa outer membrane protein</fullName>
    </alternativeName>
    <alternativeName>
        <fullName>Cysteine-rich outer membrane protein</fullName>
    </alternativeName>
</protein>
<reference key="1">
    <citation type="journal article" date="2001" name="J. Bacteriol.">
        <title>Recombination in the ompA gene but not the omcB gene of Chlamydia contributes to serovar-specific differences in tissue tropism, immune surveillance, and persistence of the organism.</title>
        <authorList>
            <person name="Millman K.L."/>
            <person name="Tavare S."/>
            <person name="Dean D."/>
        </authorList>
    </citation>
    <scope>NUCLEOTIDE SEQUENCE [GENOMIC DNA]</scope>
    <source>
        <strain>I/UW-12</strain>
        <strain>J/UW-36</strain>
    </source>
</reference>
<keyword id="KW-0133">Cell shape</keyword>
<keyword id="KW-1015">Disulfide bond</keyword>
<keyword id="KW-0574">Periplasm</keyword>
<keyword id="KW-0732">Signal</keyword>
<organism>
    <name type="scientific">Chlamydia trachomatis</name>
    <dbReference type="NCBI Taxonomy" id="813"/>
    <lineage>
        <taxon>Bacteria</taxon>
        <taxon>Pseudomonadati</taxon>
        <taxon>Chlamydiota</taxon>
        <taxon>Chlamydiia</taxon>
        <taxon>Chlamydiales</taxon>
        <taxon>Chlamydiaceae</taxon>
        <taxon>Chlamydia/Chlamydophila group</taxon>
        <taxon>Chlamydia</taxon>
    </lineage>
</organism>
<sequence length="547" mass="58627">MNKLIRRAVTIFAVTSVASLFASGVLETSMAESLSTNVISLADTKAKDNTSHKSKKARKNHSKETPVDRKEVAPVHESKATGPKQDSCFGRMYTVKVNDDRNVEITQAVPEYATVGSPYPIEITATGKRDCVDVIITQQLPCEAEFVRSDPATTPTADGKLVWKIDRLGQGEKSKITVWVKPLKEGCCFTAATVCACPEIRSVTKCGQPAICVKQEGPENACLRCPVVYKINVVNQGTATARNVVVENPVPDGYAHSSGQRVLTFTLGDMQPGEHRTITVEFCPLKRGCATNIATVSYCGGHKNTASVTTVINEPCVQVSIAGADWSYVCKPVEYVISVSNPGDLVLRDVVVEDTLSPGVTVLEAAGAQISCNKVVWTVKELNPGESLQYKVLVRAQTPGQFTNNVVVKSCSDCGTCTSCAEATTYWKGVAATHMCVVDTCDPVCVGENTVYRICVTNRGSAEDTNVSLMLKFSKELQPVSFSGPTKGTITGNTVVFDSLPRLGSKETVEFSVTLKAVSAGDARGEAILSSDTLTVPVSDTENTHIY</sequence>
<feature type="signal peptide" evidence="2">
    <location>
        <begin position="1"/>
        <end position="22"/>
    </location>
</feature>
<feature type="propeptide" id="PRO_0000248875" evidence="2">
    <location>
        <begin position="23"/>
        <end position="40"/>
    </location>
</feature>
<feature type="chain" id="PRO_0000248876" description="Large cysteine-rich periplasmic protein OmcB, serovars I/J">
    <location>
        <begin position="41"/>
        <end position="547"/>
    </location>
</feature>
<feature type="region of interest" description="Disordered" evidence="3">
    <location>
        <begin position="45"/>
        <end position="84"/>
    </location>
</feature>
<feature type="compositionally biased region" description="Basic residues" evidence="3">
    <location>
        <begin position="52"/>
        <end position="61"/>
    </location>
</feature>
<feature type="compositionally biased region" description="Basic and acidic residues" evidence="3">
    <location>
        <begin position="62"/>
        <end position="79"/>
    </location>
</feature>
<gene>
    <name type="primary">omcB</name>
    <name type="synonym">ompA</name>
</gene>
<dbReference type="EMBL" id="AF304330">
    <property type="protein sequence ID" value="AAL14100.1"/>
    <property type="molecule type" value="Genomic_DNA"/>
</dbReference>
<dbReference type="EMBL" id="AF304329">
    <property type="protein sequence ID" value="AAL14099.1"/>
    <property type="molecule type" value="Genomic_DNA"/>
</dbReference>
<dbReference type="RefSeq" id="WP_009871798.1">
    <property type="nucleotide sequence ID" value="NZ_CP017746.1"/>
</dbReference>
<dbReference type="GO" id="GO:0042597">
    <property type="term" value="C:periplasmic space"/>
    <property type="evidence" value="ECO:0007669"/>
    <property type="project" value="UniProtKB-SubCell"/>
</dbReference>
<dbReference type="GO" id="GO:0005201">
    <property type="term" value="F:extracellular matrix structural constituent"/>
    <property type="evidence" value="ECO:0007669"/>
    <property type="project" value="InterPro"/>
</dbReference>
<dbReference type="GO" id="GO:0008360">
    <property type="term" value="P:regulation of cell shape"/>
    <property type="evidence" value="ECO:0007669"/>
    <property type="project" value="UniProtKB-KW"/>
</dbReference>
<dbReference type="Gene3D" id="2.60.40.10">
    <property type="entry name" value="Immunoglobulins"/>
    <property type="match status" value="1"/>
</dbReference>
<dbReference type="InterPro" id="IPR003506">
    <property type="entry name" value="Chlam_OMP6"/>
</dbReference>
<dbReference type="InterPro" id="IPR051172">
    <property type="entry name" value="Chlamydia_OmcB"/>
</dbReference>
<dbReference type="InterPro" id="IPR047589">
    <property type="entry name" value="DUF11_rpt"/>
</dbReference>
<dbReference type="InterPro" id="IPR013783">
    <property type="entry name" value="Ig-like_fold"/>
</dbReference>
<dbReference type="InterPro" id="IPR001434">
    <property type="entry name" value="OmcB-like_DUF11"/>
</dbReference>
<dbReference type="NCBIfam" id="TIGR01451">
    <property type="entry name" value="B_ant_repeat"/>
    <property type="match status" value="1"/>
</dbReference>
<dbReference type="PANTHER" id="PTHR34819">
    <property type="entry name" value="LARGE CYSTEINE-RICH PERIPLASMIC PROTEIN OMCB"/>
    <property type="match status" value="1"/>
</dbReference>
<dbReference type="PANTHER" id="PTHR34819:SF4">
    <property type="entry name" value="LARGE CYSTEINE-RICH PERIPLASMIC PROTEIN OMCB"/>
    <property type="match status" value="1"/>
</dbReference>
<dbReference type="Pfam" id="PF03504">
    <property type="entry name" value="Chlam_OMP6"/>
    <property type="match status" value="1"/>
</dbReference>
<dbReference type="Pfam" id="PF01345">
    <property type="entry name" value="DUF11"/>
    <property type="match status" value="3"/>
</dbReference>
<dbReference type="PRINTS" id="PR01336">
    <property type="entry name" value="CHLAMIDIAOM6"/>
</dbReference>
<accession>Q933I7</accession>
<proteinExistence type="inferred from homology"/>
<evidence type="ECO:0000250" key="1"/>
<evidence type="ECO:0000255" key="2"/>
<evidence type="ECO:0000256" key="3">
    <source>
        <dbReference type="SAM" id="MobiDB-lite"/>
    </source>
</evidence>
<evidence type="ECO:0000305" key="4"/>
<comment type="function">
    <text evidence="1">In elementary bodies (EBs, the infectious stage, which is able to survive outside the host cell) provides the structural integrity of the outer envelope through disulfide cross-links with the small cysteine-rich protein and the major outer membrane porin. It has been described in publications as the Sarkosyl-insoluble COMC (Chlamydia outer membrane complex), and serves as the functional equivalent of peptidoglycan. It is present but the disulfide bonds are reduced in reticulate bodies (RBs) (By similarity).</text>
</comment>
<comment type="subunit">
    <text evidence="1">Part of a disulfide cross-linked outer membrane complex (COMC) composed of the major outer membrane porin (MOMP), the small cysteine-rich protein (OmcA) and the large cysteine-rich periplasmic protein (OmcB).</text>
</comment>
<comment type="subcellular location">
    <subcellularLocation>
        <location evidence="4">Periplasm</location>
    </subcellularLocation>
</comment>
<comment type="caution">
    <text evidence="4">Was thought to be an outer membrane protein as it is part of a disulfide cross-linked complex that is insoluble in the detergent Sarkosyl; however based on experiments in C.psittaci it is likely to be periplasmic.</text>
</comment>